<dbReference type="EC" id="1.1.1.1"/>
<dbReference type="EMBL" id="AE000516">
    <property type="protein sequence ID" value="AAK45848.1"/>
    <property type="molecule type" value="Genomic_DNA"/>
</dbReference>
<dbReference type="PIR" id="C70820">
    <property type="entry name" value="C70820"/>
</dbReference>
<dbReference type="RefSeq" id="WP_003407690.1">
    <property type="nucleotide sequence ID" value="NZ_KK341227.1"/>
</dbReference>
<dbReference type="SMR" id="P9WQC2"/>
<dbReference type="KEGG" id="mtc:MT1581"/>
<dbReference type="PATRIC" id="fig|83331.31.peg.1703"/>
<dbReference type="HOGENOM" id="CLU_026673_11_0_11"/>
<dbReference type="Proteomes" id="UP000001020">
    <property type="component" value="Chromosome"/>
</dbReference>
<dbReference type="GO" id="GO:0004022">
    <property type="term" value="F:alcohol dehydrogenase (NAD+) activity"/>
    <property type="evidence" value="ECO:0007669"/>
    <property type="project" value="UniProtKB-EC"/>
</dbReference>
<dbReference type="GO" id="GO:0008270">
    <property type="term" value="F:zinc ion binding"/>
    <property type="evidence" value="ECO:0007669"/>
    <property type="project" value="InterPro"/>
</dbReference>
<dbReference type="CDD" id="cd05188">
    <property type="entry name" value="MDR"/>
    <property type="match status" value="1"/>
</dbReference>
<dbReference type="Gene3D" id="3.90.180.10">
    <property type="entry name" value="Medium-chain alcohol dehydrogenases, catalytic domain"/>
    <property type="match status" value="1"/>
</dbReference>
<dbReference type="Gene3D" id="3.40.50.720">
    <property type="entry name" value="NAD(P)-binding Rossmann-like Domain"/>
    <property type="match status" value="1"/>
</dbReference>
<dbReference type="InterPro" id="IPR013149">
    <property type="entry name" value="ADH-like_C"/>
</dbReference>
<dbReference type="InterPro" id="IPR013154">
    <property type="entry name" value="ADH-like_N"/>
</dbReference>
<dbReference type="InterPro" id="IPR002328">
    <property type="entry name" value="ADH_Zn_CS"/>
</dbReference>
<dbReference type="InterPro" id="IPR011032">
    <property type="entry name" value="GroES-like_sf"/>
</dbReference>
<dbReference type="InterPro" id="IPR036291">
    <property type="entry name" value="NAD(P)-bd_dom_sf"/>
</dbReference>
<dbReference type="InterPro" id="IPR050129">
    <property type="entry name" value="Zn_alcohol_dh"/>
</dbReference>
<dbReference type="PANTHER" id="PTHR43401">
    <property type="entry name" value="L-THREONINE 3-DEHYDROGENASE"/>
    <property type="match status" value="1"/>
</dbReference>
<dbReference type="PANTHER" id="PTHR43401:SF2">
    <property type="entry name" value="L-THREONINE 3-DEHYDROGENASE"/>
    <property type="match status" value="1"/>
</dbReference>
<dbReference type="Pfam" id="PF08240">
    <property type="entry name" value="ADH_N"/>
    <property type="match status" value="1"/>
</dbReference>
<dbReference type="Pfam" id="PF00107">
    <property type="entry name" value="ADH_zinc_N"/>
    <property type="match status" value="1"/>
</dbReference>
<dbReference type="SUPFAM" id="SSF50129">
    <property type="entry name" value="GroES-like"/>
    <property type="match status" value="1"/>
</dbReference>
<dbReference type="SUPFAM" id="SSF51735">
    <property type="entry name" value="NAD(P)-binding Rossmann-fold domains"/>
    <property type="match status" value="1"/>
</dbReference>
<dbReference type="PROSITE" id="PS00059">
    <property type="entry name" value="ADH_ZINC"/>
    <property type="match status" value="1"/>
</dbReference>
<protein>
    <recommendedName>
        <fullName>Probable alcohol dehydrogenase adh</fullName>
        <ecNumber>1.1.1.1</ecNumber>
    </recommendedName>
</protein>
<comment type="catalytic activity">
    <reaction>
        <text>a primary alcohol + NAD(+) = an aldehyde + NADH + H(+)</text>
        <dbReference type="Rhea" id="RHEA:10736"/>
        <dbReference type="ChEBI" id="CHEBI:15378"/>
        <dbReference type="ChEBI" id="CHEBI:15734"/>
        <dbReference type="ChEBI" id="CHEBI:17478"/>
        <dbReference type="ChEBI" id="CHEBI:57540"/>
        <dbReference type="ChEBI" id="CHEBI:57945"/>
        <dbReference type="EC" id="1.1.1.1"/>
    </reaction>
</comment>
<comment type="catalytic activity">
    <reaction>
        <text>a secondary alcohol + NAD(+) = a ketone + NADH + H(+)</text>
        <dbReference type="Rhea" id="RHEA:10740"/>
        <dbReference type="ChEBI" id="CHEBI:15378"/>
        <dbReference type="ChEBI" id="CHEBI:17087"/>
        <dbReference type="ChEBI" id="CHEBI:35681"/>
        <dbReference type="ChEBI" id="CHEBI:57540"/>
        <dbReference type="ChEBI" id="CHEBI:57945"/>
        <dbReference type="EC" id="1.1.1.1"/>
    </reaction>
</comment>
<comment type="cofactor">
    <cofactor evidence="1">
        <name>Zn(2+)</name>
        <dbReference type="ChEBI" id="CHEBI:29105"/>
    </cofactor>
    <text evidence="1">Binds 2 Zn(2+) ions per subunit.</text>
</comment>
<comment type="similarity">
    <text evidence="2">Belongs to the zinc-containing alcohol dehydrogenase family.</text>
</comment>
<accession>P9WQC2</accession>
<accession>L0T9P8</accession>
<accession>O53904</accession>
<accession>Q7D8B6</accession>
<organism>
    <name type="scientific">Mycobacterium tuberculosis (strain CDC 1551 / Oshkosh)</name>
    <dbReference type="NCBI Taxonomy" id="83331"/>
    <lineage>
        <taxon>Bacteria</taxon>
        <taxon>Bacillati</taxon>
        <taxon>Actinomycetota</taxon>
        <taxon>Actinomycetes</taxon>
        <taxon>Mycobacteriales</taxon>
        <taxon>Mycobacteriaceae</taxon>
        <taxon>Mycobacterium</taxon>
        <taxon>Mycobacterium tuberculosis complex</taxon>
    </lineage>
</organism>
<name>ADH_MYCTO</name>
<keyword id="KW-0479">Metal-binding</keyword>
<keyword id="KW-0520">NAD</keyword>
<keyword id="KW-0560">Oxidoreductase</keyword>
<keyword id="KW-1185">Reference proteome</keyword>
<keyword id="KW-0862">Zinc</keyword>
<feature type="chain" id="PRO_0000426801" description="Probable alcohol dehydrogenase adh">
    <location>
        <begin position="1"/>
        <end position="367"/>
    </location>
</feature>
<feature type="binding site" evidence="1">
    <location>
        <position position="43"/>
    </location>
    <ligand>
        <name>Zn(2+)</name>
        <dbReference type="ChEBI" id="CHEBI:29105"/>
        <label>1</label>
        <note>catalytic</note>
    </ligand>
</feature>
<feature type="binding site" evidence="1">
    <location>
        <position position="64"/>
    </location>
    <ligand>
        <name>Zn(2+)</name>
        <dbReference type="ChEBI" id="CHEBI:29105"/>
        <label>1</label>
        <note>catalytic</note>
    </ligand>
</feature>
<feature type="binding site" evidence="1">
    <location>
        <position position="97"/>
    </location>
    <ligand>
        <name>Zn(2+)</name>
        <dbReference type="ChEBI" id="CHEBI:29105"/>
        <label>2</label>
    </ligand>
</feature>
<feature type="binding site" evidence="1">
    <location>
        <position position="100"/>
    </location>
    <ligand>
        <name>Zn(2+)</name>
        <dbReference type="ChEBI" id="CHEBI:29105"/>
        <label>2</label>
    </ligand>
</feature>
<feature type="binding site" evidence="1">
    <location>
        <position position="103"/>
    </location>
    <ligand>
        <name>Zn(2+)</name>
        <dbReference type="ChEBI" id="CHEBI:29105"/>
        <label>2</label>
    </ligand>
</feature>
<feature type="binding site" evidence="1">
    <location>
        <position position="111"/>
    </location>
    <ligand>
        <name>Zn(2+)</name>
        <dbReference type="ChEBI" id="CHEBI:29105"/>
        <label>2</label>
    </ligand>
</feature>
<feature type="binding site" evidence="1">
    <location>
        <position position="163"/>
    </location>
    <ligand>
        <name>Zn(2+)</name>
        <dbReference type="ChEBI" id="CHEBI:29105"/>
        <label>1</label>
        <note>catalytic</note>
    </ligand>
</feature>
<proteinExistence type="inferred from homology"/>
<gene>
    <name type="primary">adh</name>
    <name type="ordered locus">MT1581</name>
</gene>
<sequence>MSDGAVVRALVLEAPRRLVVRQYRLPRIGDDDALVRVEACGLCGTDHEQYTGELAGGFAFVPGHETVGTIAAIGPRAEQRWGVSAGDRVAVEVFQSCRQCANCRGGEYRRCVRHGLADMYGFIPVDREPGLWGGYAEYQYLAPDSMVLRVAGDLSPEVATLFNPLGAGIRWGVTIPETKPGDVVAVLGPGIRGLCAAAAAKGAGAGFVMVTGLGPRDADRLALAAQFGADLAVDVAIDDPVAALTEQTGGLADVVVDVTAKAPAAFAQAIALARPAGTVVVAGTRGVGSGAPGFSPDVVVFKELRVLGALGVDATAYRAALDLLVSGRYPFASLPRRCVRLEGAEDLLATMAGERDGVPPIHGVLTP</sequence>
<evidence type="ECO:0000250" key="1"/>
<evidence type="ECO:0000305" key="2"/>
<reference key="1">
    <citation type="journal article" date="2002" name="J. Bacteriol.">
        <title>Whole-genome comparison of Mycobacterium tuberculosis clinical and laboratory strains.</title>
        <authorList>
            <person name="Fleischmann R.D."/>
            <person name="Alland D."/>
            <person name="Eisen J.A."/>
            <person name="Carpenter L."/>
            <person name="White O."/>
            <person name="Peterson J.D."/>
            <person name="DeBoy R.T."/>
            <person name="Dodson R.J."/>
            <person name="Gwinn M.L."/>
            <person name="Haft D.H."/>
            <person name="Hickey E.K."/>
            <person name="Kolonay J.F."/>
            <person name="Nelson W.C."/>
            <person name="Umayam L.A."/>
            <person name="Ermolaeva M.D."/>
            <person name="Salzberg S.L."/>
            <person name="Delcher A."/>
            <person name="Utterback T.R."/>
            <person name="Weidman J.F."/>
            <person name="Khouri H.M."/>
            <person name="Gill J."/>
            <person name="Mikula A."/>
            <person name="Bishai W."/>
            <person name="Jacobs W.R. Jr."/>
            <person name="Venter J.C."/>
            <person name="Fraser C.M."/>
        </authorList>
    </citation>
    <scope>NUCLEOTIDE SEQUENCE [LARGE SCALE GENOMIC DNA]</scope>
    <source>
        <strain>CDC 1551 / Oshkosh</strain>
    </source>
</reference>